<name>Y1230_OCEIH</name>
<proteinExistence type="inferred from homology"/>
<accession>Q8ERS1</accession>
<gene>
    <name type="ordered locus">OB1230</name>
</gene>
<feature type="chain" id="PRO_0000299336" description="Putative phosphoesterase OB1230">
    <location>
        <begin position="1"/>
        <end position="170"/>
    </location>
</feature>
<feature type="short sequence motif" description="HXTX 1" evidence="1">
    <location>
        <begin position="34"/>
        <end position="37"/>
    </location>
</feature>
<feature type="short sequence motif" description="HXTX 2" evidence="1">
    <location>
        <begin position="115"/>
        <end position="118"/>
    </location>
</feature>
<feature type="active site" description="Proton donor" evidence="1">
    <location>
        <position position="34"/>
    </location>
</feature>
<feature type="active site" description="Proton acceptor" evidence="1">
    <location>
        <position position="115"/>
    </location>
</feature>
<reference key="1">
    <citation type="journal article" date="2002" name="Nucleic Acids Res.">
        <title>Genome sequence of Oceanobacillus iheyensis isolated from the Iheya Ridge and its unexpected adaptive capabilities to extreme environments.</title>
        <authorList>
            <person name="Takami H."/>
            <person name="Takaki Y."/>
            <person name="Uchiyama I."/>
        </authorList>
    </citation>
    <scope>NUCLEOTIDE SEQUENCE [LARGE SCALE GENOMIC DNA]</scope>
    <source>
        <strain>DSM 14371 / CIP 107618 / JCM 11309 / KCTC 3954 / HTE831</strain>
    </source>
</reference>
<keyword id="KW-0378">Hydrolase</keyword>
<keyword id="KW-1185">Reference proteome</keyword>
<evidence type="ECO:0000255" key="1">
    <source>
        <dbReference type="HAMAP-Rule" id="MF_01444"/>
    </source>
</evidence>
<organism>
    <name type="scientific">Oceanobacillus iheyensis (strain DSM 14371 / CIP 107618 / JCM 11309 / KCTC 3954 / HTE831)</name>
    <dbReference type="NCBI Taxonomy" id="221109"/>
    <lineage>
        <taxon>Bacteria</taxon>
        <taxon>Bacillati</taxon>
        <taxon>Bacillota</taxon>
        <taxon>Bacilli</taxon>
        <taxon>Bacillales</taxon>
        <taxon>Bacillaceae</taxon>
        <taxon>Oceanobacillus</taxon>
    </lineage>
</organism>
<dbReference type="EC" id="3.1.-.-" evidence="1"/>
<dbReference type="EMBL" id="BA000028">
    <property type="protein sequence ID" value="BAC13186.1"/>
    <property type="molecule type" value="Genomic_DNA"/>
</dbReference>
<dbReference type="RefSeq" id="WP_011065629.1">
    <property type="nucleotide sequence ID" value="NC_004193.1"/>
</dbReference>
<dbReference type="SMR" id="Q8ERS1"/>
<dbReference type="STRING" id="221109.gene:10733469"/>
<dbReference type="KEGG" id="oih:OB1230"/>
<dbReference type="eggNOG" id="COG1514">
    <property type="taxonomic scope" value="Bacteria"/>
</dbReference>
<dbReference type="HOGENOM" id="CLU_132020_0_0_9"/>
<dbReference type="OrthoDB" id="1524661at2"/>
<dbReference type="PhylomeDB" id="Q8ERS1"/>
<dbReference type="Proteomes" id="UP000000822">
    <property type="component" value="Chromosome"/>
</dbReference>
<dbReference type="GO" id="GO:0016788">
    <property type="term" value="F:hydrolase activity, acting on ester bonds"/>
    <property type="evidence" value="ECO:0007669"/>
    <property type="project" value="UniProtKB-UniRule"/>
</dbReference>
<dbReference type="Gene3D" id="3.90.1140.10">
    <property type="entry name" value="Cyclic phosphodiesterase"/>
    <property type="match status" value="1"/>
</dbReference>
<dbReference type="HAMAP" id="MF_01444">
    <property type="entry name" value="2H_phosphoesterase_YjcG"/>
    <property type="match status" value="1"/>
</dbReference>
<dbReference type="InterPro" id="IPR050580">
    <property type="entry name" value="2H_phosphoesterase_YjcG-like"/>
</dbReference>
<dbReference type="InterPro" id="IPR009097">
    <property type="entry name" value="Cyclic_Pdiesterase"/>
</dbReference>
<dbReference type="InterPro" id="IPR022932">
    <property type="entry name" value="YjcG"/>
</dbReference>
<dbReference type="NCBIfam" id="NF010223">
    <property type="entry name" value="PRK13679.1"/>
    <property type="match status" value="1"/>
</dbReference>
<dbReference type="PANTHER" id="PTHR40037:SF1">
    <property type="entry name" value="PHOSPHOESTERASE SAOUHSC_00951-RELATED"/>
    <property type="match status" value="1"/>
</dbReference>
<dbReference type="PANTHER" id="PTHR40037">
    <property type="entry name" value="PHOSPHOESTERASE YJCG-RELATED"/>
    <property type="match status" value="1"/>
</dbReference>
<dbReference type="Pfam" id="PF13563">
    <property type="entry name" value="2_5_RNA_ligase2"/>
    <property type="match status" value="1"/>
</dbReference>
<dbReference type="SUPFAM" id="SSF55144">
    <property type="entry name" value="LigT-like"/>
    <property type="match status" value="1"/>
</dbReference>
<sequence>MKYGIAIFPSKTIQDQANALRKRYDPRYSLIPPHLTLKESFEADEETLSETVEELRKIAKETEPFHIQINKVSTFEPVTNTIYFKVEPIQQLNDLHTKLHEGKFDDNQTHPFVPHITIAQDLEHDEFSDILGRLQMEGFNLEDYVDRFQLLYQLDNESWTVYQTFVLGRD</sequence>
<comment type="similarity">
    <text evidence="1">Belongs to the 2H phosphoesterase superfamily. YjcG family.</text>
</comment>
<protein>
    <recommendedName>
        <fullName evidence="1">Putative phosphoesterase OB1230</fullName>
        <ecNumber evidence="1">3.1.-.-</ecNumber>
    </recommendedName>
</protein>